<proteinExistence type="inferred from homology"/>
<gene>
    <name evidence="1" type="primary">recA</name>
    <name type="ordered locus">ACL_0890</name>
</gene>
<evidence type="ECO:0000255" key="1">
    <source>
        <dbReference type="HAMAP-Rule" id="MF_00268"/>
    </source>
</evidence>
<feature type="chain" id="PRO_1000078659" description="Protein RecA">
    <location>
        <begin position="1"/>
        <end position="331"/>
    </location>
</feature>
<feature type="binding site" evidence="1">
    <location>
        <begin position="66"/>
        <end position="73"/>
    </location>
    <ligand>
        <name>ATP</name>
        <dbReference type="ChEBI" id="CHEBI:30616"/>
    </ligand>
</feature>
<comment type="function">
    <text evidence="1">Can catalyze the hydrolysis of ATP in the presence of single-stranded DNA, the ATP-dependent uptake of single-stranded DNA by duplex DNA, and the ATP-dependent hybridization of homologous single-stranded DNAs. It interacts with LexA causing its activation and leading to its autocatalytic cleavage.</text>
</comment>
<comment type="subcellular location">
    <subcellularLocation>
        <location evidence="1">Cytoplasm</location>
    </subcellularLocation>
</comment>
<comment type="similarity">
    <text evidence="1">Belongs to the RecA family.</text>
</comment>
<protein>
    <recommendedName>
        <fullName evidence="1">Protein RecA</fullName>
    </recommendedName>
    <alternativeName>
        <fullName evidence="1">Recombinase A</fullName>
    </alternativeName>
</protein>
<accession>A9NGM3</accession>
<reference key="1">
    <citation type="journal article" date="2011" name="J. Bacteriol.">
        <title>Complete genome and proteome of Acholeplasma laidlawii.</title>
        <authorList>
            <person name="Lazarev V.N."/>
            <person name="Levitskii S.A."/>
            <person name="Basovskii Y.I."/>
            <person name="Chukin M.M."/>
            <person name="Akopian T.A."/>
            <person name="Vereshchagin V.V."/>
            <person name="Kostrjukova E.S."/>
            <person name="Kovaleva G.Y."/>
            <person name="Kazanov M.D."/>
            <person name="Malko D.B."/>
            <person name="Vitreschak A.G."/>
            <person name="Sernova N.V."/>
            <person name="Gelfand M.S."/>
            <person name="Demina I.A."/>
            <person name="Serebryakova M.V."/>
            <person name="Galyamina M.A."/>
            <person name="Vtyurin N.N."/>
            <person name="Rogov S.I."/>
            <person name="Alexeev D.G."/>
            <person name="Ladygina V.G."/>
            <person name="Govorun V.M."/>
        </authorList>
    </citation>
    <scope>NUCLEOTIDE SEQUENCE [LARGE SCALE GENOMIC DNA]</scope>
    <source>
        <strain>PG-8A</strain>
    </source>
</reference>
<organism>
    <name type="scientific">Acholeplasma laidlawii (strain PG-8A)</name>
    <dbReference type="NCBI Taxonomy" id="441768"/>
    <lineage>
        <taxon>Bacteria</taxon>
        <taxon>Bacillati</taxon>
        <taxon>Mycoplasmatota</taxon>
        <taxon>Mollicutes</taxon>
        <taxon>Acholeplasmatales</taxon>
        <taxon>Acholeplasmataceae</taxon>
        <taxon>Acholeplasma</taxon>
    </lineage>
</organism>
<name>RECA_ACHLI</name>
<dbReference type="EMBL" id="CP000896">
    <property type="protein sequence ID" value="ABX81503.1"/>
    <property type="molecule type" value="Genomic_DNA"/>
</dbReference>
<dbReference type="RefSeq" id="WP_012242834.1">
    <property type="nucleotide sequence ID" value="NC_010163.1"/>
</dbReference>
<dbReference type="SMR" id="A9NGM3"/>
<dbReference type="STRING" id="441768.ACL_0890"/>
<dbReference type="GeneID" id="41339043"/>
<dbReference type="KEGG" id="acl:ACL_0890"/>
<dbReference type="eggNOG" id="COG0468">
    <property type="taxonomic scope" value="Bacteria"/>
</dbReference>
<dbReference type="HOGENOM" id="CLU_040469_1_2_14"/>
<dbReference type="OrthoDB" id="9776733at2"/>
<dbReference type="Proteomes" id="UP000008558">
    <property type="component" value="Chromosome"/>
</dbReference>
<dbReference type="GO" id="GO:0005829">
    <property type="term" value="C:cytosol"/>
    <property type="evidence" value="ECO:0007669"/>
    <property type="project" value="TreeGrafter"/>
</dbReference>
<dbReference type="GO" id="GO:0005524">
    <property type="term" value="F:ATP binding"/>
    <property type="evidence" value="ECO:0007669"/>
    <property type="project" value="UniProtKB-UniRule"/>
</dbReference>
<dbReference type="GO" id="GO:0016887">
    <property type="term" value="F:ATP hydrolysis activity"/>
    <property type="evidence" value="ECO:0007669"/>
    <property type="project" value="InterPro"/>
</dbReference>
<dbReference type="GO" id="GO:0140664">
    <property type="term" value="F:ATP-dependent DNA damage sensor activity"/>
    <property type="evidence" value="ECO:0007669"/>
    <property type="project" value="InterPro"/>
</dbReference>
<dbReference type="GO" id="GO:0003684">
    <property type="term" value="F:damaged DNA binding"/>
    <property type="evidence" value="ECO:0007669"/>
    <property type="project" value="UniProtKB-UniRule"/>
</dbReference>
<dbReference type="GO" id="GO:0003697">
    <property type="term" value="F:single-stranded DNA binding"/>
    <property type="evidence" value="ECO:0007669"/>
    <property type="project" value="UniProtKB-UniRule"/>
</dbReference>
<dbReference type="GO" id="GO:0006310">
    <property type="term" value="P:DNA recombination"/>
    <property type="evidence" value="ECO:0007669"/>
    <property type="project" value="UniProtKB-UniRule"/>
</dbReference>
<dbReference type="GO" id="GO:0006281">
    <property type="term" value="P:DNA repair"/>
    <property type="evidence" value="ECO:0007669"/>
    <property type="project" value="UniProtKB-UniRule"/>
</dbReference>
<dbReference type="GO" id="GO:0009432">
    <property type="term" value="P:SOS response"/>
    <property type="evidence" value="ECO:0007669"/>
    <property type="project" value="UniProtKB-UniRule"/>
</dbReference>
<dbReference type="CDD" id="cd00983">
    <property type="entry name" value="RecA"/>
    <property type="match status" value="1"/>
</dbReference>
<dbReference type="FunFam" id="3.40.50.300:FF:000087">
    <property type="entry name" value="Recombinase RecA"/>
    <property type="match status" value="1"/>
</dbReference>
<dbReference type="Gene3D" id="3.40.50.300">
    <property type="entry name" value="P-loop containing nucleotide triphosphate hydrolases"/>
    <property type="match status" value="1"/>
</dbReference>
<dbReference type="HAMAP" id="MF_00268">
    <property type="entry name" value="RecA"/>
    <property type="match status" value="1"/>
</dbReference>
<dbReference type="InterPro" id="IPR003593">
    <property type="entry name" value="AAA+_ATPase"/>
</dbReference>
<dbReference type="InterPro" id="IPR013765">
    <property type="entry name" value="DNA_recomb/repair_RecA"/>
</dbReference>
<dbReference type="InterPro" id="IPR020584">
    <property type="entry name" value="DNA_recomb/repair_RecA_CS"/>
</dbReference>
<dbReference type="InterPro" id="IPR027417">
    <property type="entry name" value="P-loop_NTPase"/>
</dbReference>
<dbReference type="InterPro" id="IPR049261">
    <property type="entry name" value="RecA-like_C"/>
</dbReference>
<dbReference type="InterPro" id="IPR049428">
    <property type="entry name" value="RecA-like_N"/>
</dbReference>
<dbReference type="InterPro" id="IPR020588">
    <property type="entry name" value="RecA_ATP-bd"/>
</dbReference>
<dbReference type="InterPro" id="IPR023400">
    <property type="entry name" value="RecA_C_sf"/>
</dbReference>
<dbReference type="InterPro" id="IPR020587">
    <property type="entry name" value="RecA_monomer-monomer_interface"/>
</dbReference>
<dbReference type="NCBIfam" id="TIGR02012">
    <property type="entry name" value="tigrfam_recA"/>
    <property type="match status" value="1"/>
</dbReference>
<dbReference type="PANTHER" id="PTHR45900:SF1">
    <property type="entry name" value="MITOCHONDRIAL DNA REPAIR PROTEIN RECA HOMOLOG-RELATED"/>
    <property type="match status" value="1"/>
</dbReference>
<dbReference type="PANTHER" id="PTHR45900">
    <property type="entry name" value="RECA"/>
    <property type="match status" value="1"/>
</dbReference>
<dbReference type="Pfam" id="PF00154">
    <property type="entry name" value="RecA"/>
    <property type="match status" value="1"/>
</dbReference>
<dbReference type="Pfam" id="PF21096">
    <property type="entry name" value="RecA_C"/>
    <property type="match status" value="1"/>
</dbReference>
<dbReference type="PRINTS" id="PR00142">
    <property type="entry name" value="RECA"/>
</dbReference>
<dbReference type="SMART" id="SM00382">
    <property type="entry name" value="AAA"/>
    <property type="match status" value="1"/>
</dbReference>
<dbReference type="SUPFAM" id="SSF52540">
    <property type="entry name" value="P-loop containing nucleoside triphosphate hydrolases"/>
    <property type="match status" value="1"/>
</dbReference>
<dbReference type="SUPFAM" id="SSF54752">
    <property type="entry name" value="RecA protein, C-terminal domain"/>
    <property type="match status" value="1"/>
</dbReference>
<dbReference type="PROSITE" id="PS00321">
    <property type="entry name" value="RECA_1"/>
    <property type="match status" value="1"/>
</dbReference>
<dbReference type="PROSITE" id="PS50162">
    <property type="entry name" value="RECA_2"/>
    <property type="match status" value="1"/>
</dbReference>
<dbReference type="PROSITE" id="PS50163">
    <property type="entry name" value="RECA_3"/>
    <property type="match status" value="1"/>
</dbReference>
<sequence length="331" mass="35516">MSDNKKQQALELALKQIEKQFGKGSIMKLGDGADHSIEAIPSGSIALDIALGIGGYPRGRIIEVYGPESSGKTTLTLHAMASAQKQGGTVAFIDAEHALDPNYAKALGVDIDNLVLSQPDTGEQALDIAEALIKSGSIDMIVIDSVAALVPEAEIAGDMSANHVGLQARMMSQAMRKMSGVISKSNVVAIFINQIREKVGVMFGNPETTPGGRALKFFSSVRLEIRRAEAIKQGSEMIGIKSNVKVVKSKVAPPLKTASIDIMYGTGISRSGEVLDLSVELNLVNKSGAWYNIGEEKLGQGRDNAKQYLEDKPELLNELEKKVRTHFKLTK</sequence>
<keyword id="KW-0067">ATP-binding</keyword>
<keyword id="KW-0963">Cytoplasm</keyword>
<keyword id="KW-0227">DNA damage</keyword>
<keyword id="KW-0233">DNA recombination</keyword>
<keyword id="KW-0234">DNA repair</keyword>
<keyword id="KW-0238">DNA-binding</keyword>
<keyword id="KW-0547">Nucleotide-binding</keyword>
<keyword id="KW-1185">Reference proteome</keyword>
<keyword id="KW-0742">SOS response</keyword>